<evidence type="ECO:0000255" key="1">
    <source>
        <dbReference type="HAMAP-Rule" id="MF_01207"/>
    </source>
</evidence>
<keyword id="KW-0997">Cell inner membrane</keyword>
<keyword id="KW-1003">Cell membrane</keyword>
<keyword id="KW-0249">Electron transport</keyword>
<keyword id="KW-0285">Flavoprotein</keyword>
<keyword id="KW-0288">FMN</keyword>
<keyword id="KW-0349">Heme</keyword>
<keyword id="KW-0408">Iron</keyword>
<keyword id="KW-0472">Membrane</keyword>
<keyword id="KW-0479">Metal-binding</keyword>
<keyword id="KW-0812">Transmembrane</keyword>
<keyword id="KW-1133">Transmembrane helix</keyword>
<keyword id="KW-0813">Transport</keyword>
<dbReference type="EMBL" id="CP000709">
    <property type="protein sequence ID" value="ABQ62365.1"/>
    <property type="molecule type" value="Genomic_DNA"/>
</dbReference>
<dbReference type="RefSeq" id="WP_002965660.1">
    <property type="nucleotide sequence ID" value="NC_009504.1"/>
</dbReference>
<dbReference type="SMR" id="A5VVQ3"/>
<dbReference type="GeneID" id="93015803"/>
<dbReference type="KEGG" id="bov:BOV_A0933"/>
<dbReference type="HOGENOM" id="CLU_080662_2_0_5"/>
<dbReference type="PhylomeDB" id="A5VVQ3"/>
<dbReference type="Proteomes" id="UP000006383">
    <property type="component" value="Chromosome II"/>
</dbReference>
<dbReference type="GO" id="GO:0005886">
    <property type="term" value="C:plasma membrane"/>
    <property type="evidence" value="ECO:0007669"/>
    <property type="project" value="UniProtKB-SubCell"/>
</dbReference>
<dbReference type="GO" id="GO:0009055">
    <property type="term" value="F:electron transfer activity"/>
    <property type="evidence" value="ECO:0007669"/>
    <property type="project" value="UniProtKB-UniRule"/>
</dbReference>
<dbReference type="GO" id="GO:0010181">
    <property type="term" value="F:FMN binding"/>
    <property type="evidence" value="ECO:0007669"/>
    <property type="project" value="UniProtKB-UniRule"/>
</dbReference>
<dbReference type="GO" id="GO:0020037">
    <property type="term" value="F:heme binding"/>
    <property type="evidence" value="ECO:0007669"/>
    <property type="project" value="UniProtKB-UniRule"/>
</dbReference>
<dbReference type="GO" id="GO:0046872">
    <property type="term" value="F:metal ion binding"/>
    <property type="evidence" value="ECO:0007669"/>
    <property type="project" value="UniProtKB-KW"/>
</dbReference>
<dbReference type="GO" id="GO:0016679">
    <property type="term" value="F:oxidoreductase activity, acting on diphenols and related substances as donors"/>
    <property type="evidence" value="ECO:0007669"/>
    <property type="project" value="TreeGrafter"/>
</dbReference>
<dbReference type="GO" id="GO:0030091">
    <property type="term" value="P:protein repair"/>
    <property type="evidence" value="ECO:0007669"/>
    <property type="project" value="UniProtKB-UniRule"/>
</dbReference>
<dbReference type="HAMAP" id="MF_01207">
    <property type="entry name" value="MsrQ"/>
    <property type="match status" value="1"/>
</dbReference>
<dbReference type="InterPro" id="IPR013130">
    <property type="entry name" value="Fe3_Rdtase_TM_dom"/>
</dbReference>
<dbReference type="InterPro" id="IPR022837">
    <property type="entry name" value="MsrQ-like"/>
</dbReference>
<dbReference type="NCBIfam" id="NF003833">
    <property type="entry name" value="PRK05419.1-5"/>
    <property type="match status" value="1"/>
</dbReference>
<dbReference type="PANTHER" id="PTHR36964">
    <property type="entry name" value="PROTEIN-METHIONINE-SULFOXIDE REDUCTASE HEME-BINDING SUBUNIT MSRQ"/>
    <property type="match status" value="1"/>
</dbReference>
<dbReference type="PANTHER" id="PTHR36964:SF1">
    <property type="entry name" value="PROTEIN-METHIONINE-SULFOXIDE REDUCTASE HEME-BINDING SUBUNIT MSRQ"/>
    <property type="match status" value="1"/>
</dbReference>
<dbReference type="Pfam" id="PF01794">
    <property type="entry name" value="Ferric_reduct"/>
    <property type="match status" value="1"/>
</dbReference>
<name>MSRQ_BRUO2</name>
<gene>
    <name evidence="1" type="primary">msrQ</name>
    <name type="ordered locus">BOV_A0933</name>
</gene>
<protein>
    <recommendedName>
        <fullName evidence="1">Protein-methionine-sulfoxide reductase heme-binding subunit MsrQ</fullName>
    </recommendedName>
    <alternativeName>
        <fullName evidence="1">Flavocytochrome MsrQ</fullName>
    </alternativeName>
</protein>
<accession>A5VVQ3</accession>
<reference key="1">
    <citation type="journal article" date="2009" name="PLoS ONE">
        <title>Genome degradation in Brucella ovis corresponds with narrowing of its host range and tissue tropism.</title>
        <authorList>
            <person name="Tsolis R.M."/>
            <person name="Seshadri R."/>
            <person name="Santos R.L."/>
            <person name="Sangari F.J."/>
            <person name="Lobo J.M."/>
            <person name="de Jong M.F."/>
            <person name="Ren Q."/>
            <person name="Myers G."/>
            <person name="Brinkac L.M."/>
            <person name="Nelson W.C."/>
            <person name="Deboy R.T."/>
            <person name="Angiuoli S."/>
            <person name="Khouri H."/>
            <person name="Dimitrov G."/>
            <person name="Robinson J.R."/>
            <person name="Mulligan S."/>
            <person name="Walker R.L."/>
            <person name="Elzer P.E."/>
            <person name="Hassan K.A."/>
            <person name="Paulsen I.T."/>
        </authorList>
    </citation>
    <scope>NUCLEOTIDE SEQUENCE [LARGE SCALE GENOMIC DNA]</scope>
    <source>
        <strain>ATCC 25840 / 63/290 / NCTC 10512</strain>
    </source>
</reference>
<comment type="function">
    <text evidence="1">Part of the MsrPQ system that repairs oxidized periplasmic proteins containing methionine sulfoxide residues (Met-O), using respiratory chain electrons. Thus protects these proteins from oxidative-stress damage caused by reactive species of oxygen and chlorine generated by the host defense mechanisms. MsrPQ is essential for the maintenance of envelope integrity under bleach stress, rescuing a wide series of structurally unrelated periplasmic proteins from methionine oxidation. MsrQ provides electrons for reduction to the reductase catalytic subunit MsrP, using the quinone pool of the respiratory chain.</text>
</comment>
<comment type="cofactor">
    <cofactor evidence="1">
        <name>FMN</name>
        <dbReference type="ChEBI" id="CHEBI:58210"/>
    </cofactor>
    <text evidence="1">Binds 1 FMN per subunit.</text>
</comment>
<comment type="cofactor">
    <cofactor evidence="1">
        <name>heme b</name>
        <dbReference type="ChEBI" id="CHEBI:60344"/>
    </cofactor>
    <text evidence="1">Binds 1 heme b (iron(II)-protoporphyrin IX) group per subunit.</text>
</comment>
<comment type="subunit">
    <text evidence="1">Heterodimer of a catalytic subunit (MsrP) and a heme-binding subunit (MsrQ).</text>
</comment>
<comment type="subcellular location">
    <subcellularLocation>
        <location evidence="1">Cell inner membrane</location>
        <topology evidence="1">Multi-pass membrane protein</topology>
    </subcellularLocation>
</comment>
<comment type="similarity">
    <text evidence="1">Belongs to the MsrQ family.</text>
</comment>
<proteinExistence type="inferred from homology"/>
<organism>
    <name type="scientific">Brucella ovis (strain ATCC 25840 / 63/290 / NCTC 10512)</name>
    <dbReference type="NCBI Taxonomy" id="444178"/>
    <lineage>
        <taxon>Bacteria</taxon>
        <taxon>Pseudomonadati</taxon>
        <taxon>Pseudomonadota</taxon>
        <taxon>Alphaproteobacteria</taxon>
        <taxon>Hyphomicrobiales</taxon>
        <taxon>Brucellaceae</taxon>
        <taxon>Brucella/Ochrobactrum group</taxon>
        <taxon>Brucella</taxon>
    </lineage>
</organism>
<feature type="chain" id="PRO_1000066170" description="Protein-methionine-sulfoxide reductase heme-binding subunit MsrQ">
    <location>
        <begin position="1"/>
        <end position="220"/>
    </location>
</feature>
<feature type="transmembrane region" description="Helical" evidence="1">
    <location>
        <begin position="20"/>
        <end position="40"/>
    </location>
</feature>
<feature type="transmembrane region" description="Helical" evidence="1">
    <location>
        <begin position="52"/>
        <end position="72"/>
    </location>
</feature>
<feature type="transmembrane region" description="Helical" evidence="1">
    <location>
        <begin position="86"/>
        <end position="106"/>
    </location>
</feature>
<feature type="transmembrane region" description="Helical" evidence="1">
    <location>
        <begin position="122"/>
        <end position="142"/>
    </location>
</feature>
<feature type="transmembrane region" description="Helical" evidence="1">
    <location>
        <begin position="153"/>
        <end position="173"/>
    </location>
</feature>
<feature type="transmembrane region" description="Helical" evidence="1">
    <location>
        <begin position="175"/>
        <end position="195"/>
    </location>
</feature>
<sequence length="220" mass="24797">MAAATGTRKKKTPRPGQWKLWLLYTAGFVPAVWTFYLGATGQLGADPVKTFEHLLGLWALRFLILTLLVTPIRDLTGITLLRYRRALGLLAFYYALMHFTTYMVLDQGLNLSAIITDIVRRPFITIGMISLALLVPLALTSNNWSIRKLGRRWSSLHKLVYIAIAGSAVHFLMSVKSWPAEPVIYAAIVAALLLWRLARPYLRTRKPALRPRGEAIALRK</sequence>